<organism>
    <name type="scientific">Escherichia coli (strain K12)</name>
    <dbReference type="NCBI Taxonomy" id="83333"/>
    <lineage>
        <taxon>Bacteria</taxon>
        <taxon>Pseudomonadati</taxon>
        <taxon>Pseudomonadota</taxon>
        <taxon>Gammaproteobacteria</taxon>
        <taxon>Enterobacterales</taxon>
        <taxon>Enterobacteriaceae</taxon>
        <taxon>Escherichia</taxon>
    </lineage>
</organism>
<reference key="1">
    <citation type="journal article" date="1995" name="J. Bacteriol.">
        <title>Identification and characterization of an outer membrane protein, OmpX, in Escherichia coli that is homologous to a family of outer membrane proteins including Ail of Yersinia enterocolitica.</title>
        <authorList>
            <person name="Mecsas J."/>
            <person name="Welch R."/>
            <person name="Erickson J.W."/>
            <person name="Gross C.A."/>
        </authorList>
    </citation>
    <scope>NUCLEOTIDE SEQUENCE [GENOMIC DNA]</scope>
    <source>
        <strain>K12 / MG1655 / ATCC 47076</strain>
    </source>
</reference>
<reference key="2">
    <citation type="journal article" date="1996" name="DNA Res.">
        <title>A 718-kb DNA sequence of the Escherichia coli K-12 genome corresponding to the 12.7-28.0 min region on the linkage map.</title>
        <authorList>
            <person name="Oshima T."/>
            <person name="Aiba H."/>
            <person name="Baba T."/>
            <person name="Fujita K."/>
            <person name="Hayashi K."/>
            <person name="Honjo A."/>
            <person name="Ikemoto K."/>
            <person name="Inada T."/>
            <person name="Itoh T."/>
            <person name="Kajihara M."/>
            <person name="Kanai K."/>
            <person name="Kashimoto K."/>
            <person name="Kimura S."/>
            <person name="Kitagawa M."/>
            <person name="Makino K."/>
            <person name="Masuda S."/>
            <person name="Miki T."/>
            <person name="Mizobuchi K."/>
            <person name="Mori H."/>
            <person name="Motomura K."/>
            <person name="Nakamura Y."/>
            <person name="Nashimoto H."/>
            <person name="Nishio Y."/>
            <person name="Saito N."/>
            <person name="Sampei G."/>
            <person name="Seki Y."/>
            <person name="Tagami H."/>
            <person name="Takemoto K."/>
            <person name="Wada C."/>
            <person name="Yamamoto Y."/>
            <person name="Yano M."/>
            <person name="Horiuchi T."/>
        </authorList>
    </citation>
    <scope>NUCLEOTIDE SEQUENCE [LARGE SCALE GENOMIC DNA]</scope>
    <source>
        <strain>K12 / W3110 / ATCC 27325 / DSM 5911</strain>
    </source>
</reference>
<reference key="3">
    <citation type="journal article" date="1997" name="Science">
        <title>The complete genome sequence of Escherichia coli K-12.</title>
        <authorList>
            <person name="Blattner F.R."/>
            <person name="Plunkett G. III"/>
            <person name="Bloch C.A."/>
            <person name="Perna N.T."/>
            <person name="Burland V."/>
            <person name="Riley M."/>
            <person name="Collado-Vides J."/>
            <person name="Glasner J.D."/>
            <person name="Rode C.K."/>
            <person name="Mayhew G.F."/>
            <person name="Gregor J."/>
            <person name="Davis N.W."/>
            <person name="Kirkpatrick H.A."/>
            <person name="Goeden M.A."/>
            <person name="Rose D.J."/>
            <person name="Mau B."/>
            <person name="Shao Y."/>
        </authorList>
    </citation>
    <scope>NUCLEOTIDE SEQUENCE [LARGE SCALE GENOMIC DNA]</scope>
    <source>
        <strain>K12 / MG1655 / ATCC 47076</strain>
    </source>
</reference>
<reference key="4">
    <citation type="journal article" date="2006" name="Mol. Syst. Biol.">
        <title>Highly accurate genome sequences of Escherichia coli K-12 strains MG1655 and W3110.</title>
        <authorList>
            <person name="Hayashi K."/>
            <person name="Morooka N."/>
            <person name="Yamamoto Y."/>
            <person name="Fujita K."/>
            <person name="Isono K."/>
            <person name="Choi S."/>
            <person name="Ohtsubo E."/>
            <person name="Baba T."/>
            <person name="Wanner B.L."/>
            <person name="Mori H."/>
            <person name="Horiuchi T."/>
        </authorList>
    </citation>
    <scope>NUCLEOTIDE SEQUENCE [LARGE SCALE GENOMIC DNA]</scope>
    <source>
        <strain>K12 / W3110 / ATCC 27325 / DSM 5911</strain>
    </source>
</reference>
<reference key="5">
    <citation type="journal article" date="1994" name="J. Bacteriol.">
        <title>Characterization of the sigma 38-dependent expression of a core Escherichia coli starvation gene, pexB.</title>
        <authorList>
            <person name="Lomovskaya O.L."/>
            <person name="Kidwell J.P."/>
            <person name="Matin A."/>
        </authorList>
    </citation>
    <scope>NUCLEOTIDE SEQUENCE [GENOMIC DNA] OF 1-137</scope>
    <source>
        <strain>K12 / W3110 / ATCC 27325 / DSM 5911</strain>
    </source>
</reference>
<reference key="6">
    <citation type="journal article" date="1998" name="Electrophoresis">
        <title>Extraction of membrane proteins by differential solubilization for separation using two-dimensional gel electrophoresis.</title>
        <authorList>
            <person name="Molloy M.P."/>
            <person name="Herbert B.R."/>
            <person name="Walsh B.J."/>
            <person name="Tyler M.I."/>
            <person name="Traini M."/>
            <person name="Sanchez J.-C."/>
            <person name="Hochstrasser D.F."/>
            <person name="Williams K.L."/>
            <person name="Gooley A.A."/>
        </authorList>
    </citation>
    <scope>PROTEIN SEQUENCE OF 24-28</scope>
    <source>
        <strain>K12 / W3110 / ATCC 27325 / DSM 5911</strain>
    </source>
</reference>
<reference key="7">
    <citation type="journal article" date="1999" name="Structure">
        <title>The structure of the outer membrane protein OmpX from Escherichia coli reveals possible mechanisms of virulence.</title>
        <authorList>
            <person name="Vogt J."/>
            <person name="Schulz G.E."/>
        </authorList>
    </citation>
    <scope>X-RAY CRYSTALLOGRAPHY (1.9 ANGSTROMS) OF 24-171</scope>
</reference>
<feature type="signal peptide" evidence="1">
    <location>
        <begin position="1"/>
        <end position="23"/>
    </location>
</feature>
<feature type="chain" id="PRO_0000020199" description="Outer membrane protein X">
    <location>
        <begin position="24"/>
        <end position="171"/>
    </location>
</feature>
<feature type="topological domain" description="Periplasmic">
    <location>
        <begin position="24"/>
        <end position="25"/>
    </location>
</feature>
<feature type="transmembrane region" description="Beta stranded">
    <location>
        <begin position="26"/>
        <end position="35"/>
    </location>
</feature>
<feature type="topological domain" description="Extracellular">
    <location>
        <begin position="36"/>
        <end position="44"/>
    </location>
</feature>
<feature type="transmembrane region" description="Beta stranded">
    <location>
        <begin position="45"/>
        <end position="54"/>
    </location>
</feature>
<feature type="topological domain" description="Periplasmic">
    <location>
        <begin position="55"/>
        <end position="59"/>
    </location>
</feature>
<feature type="transmembrane region" description="Beta stranded">
    <location>
        <begin position="60"/>
        <end position="69"/>
    </location>
</feature>
<feature type="topological domain" description="Extracellular">
    <location>
        <begin position="70"/>
        <end position="85"/>
    </location>
</feature>
<feature type="transmembrane region" description="Beta stranded">
    <location>
        <begin position="86"/>
        <end position="95"/>
    </location>
</feature>
<feature type="topological domain" description="Periplasmic">
    <location>
        <begin position="96"/>
        <end position="99"/>
    </location>
</feature>
<feature type="transmembrane region" description="Beta stranded">
    <location>
        <begin position="100"/>
        <end position="109"/>
    </location>
</feature>
<feature type="topological domain" description="Extracellular">
    <location>
        <begin position="110"/>
        <end position="129"/>
    </location>
</feature>
<feature type="transmembrane region" description="Beta stranded">
    <location>
        <begin position="130"/>
        <end position="139"/>
    </location>
</feature>
<feature type="topological domain" description="Periplasmic">
    <location>
        <begin position="140"/>
        <end position="143"/>
    </location>
</feature>
<feature type="transmembrane region" description="Beta stranded">
    <location>
        <begin position="144"/>
        <end position="153"/>
    </location>
</feature>
<feature type="topological domain" description="Extracellular">
    <location>
        <begin position="154"/>
        <end position="160"/>
    </location>
</feature>
<feature type="transmembrane region" description="Beta stranded">
    <location>
        <begin position="161"/>
        <end position="170"/>
    </location>
</feature>
<feature type="topological domain" description="Periplasmic">
    <location>
        <position position="171"/>
    </location>
</feature>
<feature type="sequence conflict" description="In Ref. 5; AAA21856." evidence="2" ref="5">
    <original>L</original>
    <variation>M</variation>
    <location>
        <position position="10"/>
    </location>
</feature>
<feature type="strand" evidence="4">
    <location>
        <begin position="25"/>
        <end position="37"/>
    </location>
</feature>
<feature type="turn" evidence="4">
    <location>
        <begin position="38"/>
        <end position="40"/>
    </location>
</feature>
<feature type="strand" evidence="4">
    <location>
        <begin position="41"/>
        <end position="54"/>
    </location>
</feature>
<feature type="strand" evidence="3">
    <location>
        <begin position="55"/>
        <end position="57"/>
    </location>
</feature>
<feature type="strand" evidence="4">
    <location>
        <begin position="59"/>
        <end position="74"/>
    </location>
</feature>
<feature type="strand" evidence="3">
    <location>
        <begin position="75"/>
        <end position="77"/>
    </location>
</feature>
<feature type="strand" evidence="4">
    <location>
        <begin position="80"/>
        <end position="97"/>
    </location>
</feature>
<feature type="strand" evidence="4">
    <location>
        <begin position="100"/>
        <end position="117"/>
    </location>
</feature>
<feature type="turn" evidence="4">
    <location>
        <begin position="118"/>
        <end position="120"/>
    </location>
</feature>
<feature type="strand" evidence="4">
    <location>
        <begin position="121"/>
        <end position="138"/>
    </location>
</feature>
<feature type="strand" evidence="3">
    <location>
        <begin position="141"/>
        <end position="143"/>
    </location>
</feature>
<feature type="strand" evidence="4">
    <location>
        <begin position="144"/>
        <end position="155"/>
    </location>
</feature>
<feature type="strand" evidence="4">
    <location>
        <begin position="158"/>
        <end position="170"/>
    </location>
</feature>
<protein>
    <recommendedName>
        <fullName>Outer membrane protein X</fullName>
    </recommendedName>
</protein>
<evidence type="ECO:0000269" key="1">
    <source>
    </source>
</evidence>
<evidence type="ECO:0000305" key="2"/>
<evidence type="ECO:0007829" key="3">
    <source>
        <dbReference type="PDB" id="1ORM"/>
    </source>
</evidence>
<evidence type="ECO:0007829" key="4">
    <source>
        <dbReference type="PDB" id="1QJ8"/>
    </source>
</evidence>
<name>OMPX_ECOLI</name>
<gene>
    <name type="primary">ompX</name>
    <name type="synonym">ybiG</name>
    <name type="ordered locus">b0814</name>
    <name type="ordered locus">JW0799</name>
</gene>
<comment type="interaction">
    <interactant intactId="EBI-552413">
        <id>P0A917</id>
    </interactant>
    <interactant intactId="EBI-548242">
        <id>P0AEU7</id>
        <label>skp</label>
    </interactant>
    <organismsDiffer>false</organismsDiffer>
    <experiments>2</experiments>
</comment>
<comment type="subcellular location">
    <subcellularLocation>
        <location>Cell outer membrane</location>
        <topology>Multi-pass membrane protein</topology>
    </subcellularLocation>
</comment>
<comment type="similarity">
    <text evidence="2">Belongs to the outer membrane OOP (TC 1.B.6) superfamily. OmpX family.</text>
</comment>
<accession>P0A917</accession>
<accession>P36546</accession>
<dbReference type="EMBL" id="L37088">
    <property type="protein sequence ID" value="AAA66329.1"/>
    <property type="molecule type" value="Genomic_DNA"/>
</dbReference>
<dbReference type="EMBL" id="U00096">
    <property type="protein sequence ID" value="AAC73901.1"/>
    <property type="molecule type" value="Genomic_DNA"/>
</dbReference>
<dbReference type="EMBL" id="AP009048">
    <property type="protein sequence ID" value="BAA35486.1"/>
    <property type="molecule type" value="Genomic_DNA"/>
</dbReference>
<dbReference type="EMBL" id="U04242">
    <property type="protein sequence ID" value="AAA21856.1"/>
    <property type="molecule type" value="Genomic_DNA"/>
</dbReference>
<dbReference type="PIR" id="I55173">
    <property type="entry name" value="I55173"/>
</dbReference>
<dbReference type="RefSeq" id="NP_415335.1">
    <property type="nucleotide sequence ID" value="NC_000913.3"/>
</dbReference>
<dbReference type="RefSeq" id="WP_001295296.1">
    <property type="nucleotide sequence ID" value="NZ_STEB01000019.1"/>
</dbReference>
<dbReference type="PDB" id="1ORM">
    <property type="method" value="NMR"/>
    <property type="chains" value="A=24-171"/>
</dbReference>
<dbReference type="PDB" id="1Q9F">
    <property type="method" value="NMR"/>
    <property type="chains" value="A=24-171"/>
</dbReference>
<dbReference type="PDB" id="1Q9G">
    <property type="method" value="NMR"/>
    <property type="chains" value="A=24-171"/>
</dbReference>
<dbReference type="PDB" id="1QJ8">
    <property type="method" value="X-ray"/>
    <property type="resolution" value="1.90 A"/>
    <property type="chains" value="A=24-171"/>
</dbReference>
<dbReference type="PDB" id="1QJ9">
    <property type="method" value="X-ray"/>
    <property type="resolution" value="2.10 A"/>
    <property type="chains" value="A=24-171"/>
</dbReference>
<dbReference type="PDB" id="2M06">
    <property type="method" value="NMR"/>
    <property type="chains" value="A=24-171"/>
</dbReference>
<dbReference type="PDB" id="2M07">
    <property type="method" value="NMR"/>
    <property type="chains" value="A=24-171"/>
</dbReference>
<dbReference type="PDB" id="2MNH">
    <property type="method" value="NMR"/>
    <property type="chains" value="A=24-171"/>
</dbReference>
<dbReference type="PDB" id="8QPV">
    <property type="method" value="EM"/>
    <property type="resolution" value="4.00 A"/>
    <property type="chains" value="F=24-171"/>
</dbReference>
<dbReference type="PDB" id="8QPW">
    <property type="method" value="EM"/>
    <property type="resolution" value="5.30 A"/>
    <property type="chains" value="X=24-171"/>
</dbReference>
<dbReference type="PDBsum" id="1ORM"/>
<dbReference type="PDBsum" id="1Q9F"/>
<dbReference type="PDBsum" id="1Q9G"/>
<dbReference type="PDBsum" id="1QJ8"/>
<dbReference type="PDBsum" id="1QJ9"/>
<dbReference type="PDBsum" id="2M06"/>
<dbReference type="PDBsum" id="2M07"/>
<dbReference type="PDBsum" id="2MNH"/>
<dbReference type="PDBsum" id="8QPV"/>
<dbReference type="PDBsum" id="8QPW"/>
<dbReference type="BMRB" id="P0A917"/>
<dbReference type="EMDB" id="EMD-18563"/>
<dbReference type="SMR" id="P0A917"/>
<dbReference type="BioGRID" id="4261010">
    <property type="interactions" value="284"/>
</dbReference>
<dbReference type="DIP" id="DIP-48016N"/>
<dbReference type="FunCoup" id="P0A917">
    <property type="interactions" value="106"/>
</dbReference>
<dbReference type="IntAct" id="P0A917">
    <property type="interactions" value="3"/>
</dbReference>
<dbReference type="MINT" id="P0A917"/>
<dbReference type="STRING" id="511145.b0814"/>
<dbReference type="DrugBank" id="DB04233">
    <property type="generic name" value="(Hydroxyethyloxy)Tri(Ethyloxy)Octane"/>
</dbReference>
<dbReference type="TCDB" id="1.B.6.2.1">
    <property type="family name" value="the ompa-ompf porin (oop) family"/>
</dbReference>
<dbReference type="jPOST" id="P0A917"/>
<dbReference type="PaxDb" id="511145-b0814"/>
<dbReference type="EnsemblBacteria" id="AAC73901">
    <property type="protein sequence ID" value="AAC73901"/>
    <property type="gene ID" value="b0814"/>
</dbReference>
<dbReference type="GeneID" id="93776613"/>
<dbReference type="GeneID" id="944967"/>
<dbReference type="KEGG" id="ecj:JW0799"/>
<dbReference type="KEGG" id="eco:b0814"/>
<dbReference type="KEGG" id="ecoc:C3026_05125"/>
<dbReference type="PATRIC" id="fig|1411691.4.peg.1464"/>
<dbReference type="EchoBASE" id="EB2056"/>
<dbReference type="eggNOG" id="COG3637">
    <property type="taxonomic scope" value="Bacteria"/>
</dbReference>
<dbReference type="HOGENOM" id="CLU_099385_1_0_6"/>
<dbReference type="InParanoid" id="P0A917"/>
<dbReference type="OMA" id="RFNDWAS"/>
<dbReference type="OrthoDB" id="6504170at2"/>
<dbReference type="PhylomeDB" id="P0A917"/>
<dbReference type="BioCyc" id="EcoCyc:EG12117-MONOMER"/>
<dbReference type="EvolutionaryTrace" id="P0A917"/>
<dbReference type="PHI-base" id="PHI:6250"/>
<dbReference type="PRO" id="PR:P0A917"/>
<dbReference type="Proteomes" id="UP000000625">
    <property type="component" value="Chromosome"/>
</dbReference>
<dbReference type="GO" id="GO:0009279">
    <property type="term" value="C:cell outer membrane"/>
    <property type="evidence" value="ECO:0000314"/>
    <property type="project" value="EcoCyc"/>
</dbReference>
<dbReference type="GO" id="GO:0044384">
    <property type="term" value="C:host outer membrane"/>
    <property type="evidence" value="ECO:0007669"/>
    <property type="project" value="InterPro"/>
</dbReference>
<dbReference type="Gene3D" id="2.40.160.20">
    <property type="match status" value="1"/>
</dbReference>
<dbReference type="InterPro" id="IPR051723">
    <property type="entry name" value="Bact_OM_Invasion-Related"/>
</dbReference>
<dbReference type="InterPro" id="IPR000758">
    <property type="entry name" value="Enterovir_OMP"/>
</dbReference>
<dbReference type="InterPro" id="IPR011250">
    <property type="entry name" value="OMP/PagP_b-brl"/>
</dbReference>
<dbReference type="InterPro" id="IPR027385">
    <property type="entry name" value="OMP_b-brl"/>
</dbReference>
<dbReference type="NCBIfam" id="NF006917">
    <property type="entry name" value="PRK09408.1"/>
    <property type="match status" value="1"/>
</dbReference>
<dbReference type="PANTHER" id="PTHR35892">
    <property type="entry name" value="OUTER MEMBRANE PROTEIN PAGN-RELATED"/>
    <property type="match status" value="1"/>
</dbReference>
<dbReference type="PANTHER" id="PTHR35892:SF3">
    <property type="entry name" value="OUTER MEMBRANE PROTEIN X"/>
    <property type="match status" value="1"/>
</dbReference>
<dbReference type="Pfam" id="PF13505">
    <property type="entry name" value="OMP_b-brl"/>
    <property type="match status" value="1"/>
</dbReference>
<dbReference type="PRINTS" id="PR00316">
    <property type="entry name" value="ENTEROVIROMP"/>
</dbReference>
<dbReference type="SUPFAM" id="SSF56925">
    <property type="entry name" value="OMPA-like"/>
    <property type="match status" value="1"/>
</dbReference>
<dbReference type="PROSITE" id="PS00694">
    <property type="entry name" value="ENT_VIR_OMP_1"/>
    <property type="match status" value="1"/>
</dbReference>
<dbReference type="PROSITE" id="PS00695">
    <property type="entry name" value="ENT_VIR_OMP_2"/>
    <property type="match status" value="1"/>
</dbReference>
<proteinExistence type="evidence at protein level"/>
<keyword id="KW-0002">3D-structure</keyword>
<keyword id="KW-0998">Cell outer membrane</keyword>
<keyword id="KW-0903">Direct protein sequencing</keyword>
<keyword id="KW-0472">Membrane</keyword>
<keyword id="KW-1185">Reference proteome</keyword>
<keyword id="KW-0732">Signal</keyword>
<keyword id="KW-0812">Transmembrane</keyword>
<keyword id="KW-1134">Transmembrane beta strand</keyword>
<sequence>MKKIACLSALAAVLAFTAGTSVAATSTVTGGYAQSDAQGQMNKMGGFNLKYRYEEDNSPLGVIGSFTYTEKSRTASSGDYNKNQYYGITAGPAYRINDWASIYGVVGVGYGKFQTTEYPTYKHDTSDYGFSYGAGLQFNPMENVALDFSYEQSRIRSVDVGTWIAGVGYRF</sequence>